<comment type="function">
    <text evidence="1">The SPT4-SPT5 complex mediates both activation and inhibition of transcription elongation, and plays a role in pre-mRNA processing. This complex seems to be important for the stability of the RNA polymerase II elongation machinery on the chromatin template but not for the inherent ability of this machinery to translocate down the gene (By similarity).</text>
</comment>
<comment type="subunit">
    <text evidence="1">Component of the SPT4-SPT5 complex. Interacts with RNA polymerase II (By similarity).</text>
</comment>
<comment type="subcellular location">
    <subcellularLocation>
        <location evidence="1">Nucleus</location>
    </subcellularLocation>
</comment>
<comment type="similarity">
    <text evidence="3">Belongs to the SPT5 family.</text>
</comment>
<keyword id="KW-0507">mRNA processing</keyword>
<keyword id="KW-0539">Nucleus</keyword>
<keyword id="KW-1185">Reference proteome</keyword>
<keyword id="KW-0677">Repeat</keyword>
<keyword id="KW-0804">Transcription</keyword>
<gene>
    <name type="primary">SPT5</name>
    <name type="ordered locus">CAGL0H04697g</name>
</gene>
<reference key="1">
    <citation type="journal article" date="2004" name="Nature">
        <title>Genome evolution in yeasts.</title>
        <authorList>
            <person name="Dujon B."/>
            <person name="Sherman D."/>
            <person name="Fischer G."/>
            <person name="Durrens P."/>
            <person name="Casaregola S."/>
            <person name="Lafontaine I."/>
            <person name="de Montigny J."/>
            <person name="Marck C."/>
            <person name="Neuveglise C."/>
            <person name="Talla E."/>
            <person name="Goffard N."/>
            <person name="Frangeul L."/>
            <person name="Aigle M."/>
            <person name="Anthouard V."/>
            <person name="Babour A."/>
            <person name="Barbe V."/>
            <person name="Barnay S."/>
            <person name="Blanchin S."/>
            <person name="Beckerich J.-M."/>
            <person name="Beyne E."/>
            <person name="Bleykasten C."/>
            <person name="Boisrame A."/>
            <person name="Boyer J."/>
            <person name="Cattolico L."/>
            <person name="Confanioleri F."/>
            <person name="de Daruvar A."/>
            <person name="Despons L."/>
            <person name="Fabre E."/>
            <person name="Fairhead C."/>
            <person name="Ferry-Dumazet H."/>
            <person name="Groppi A."/>
            <person name="Hantraye F."/>
            <person name="Hennequin C."/>
            <person name="Jauniaux N."/>
            <person name="Joyet P."/>
            <person name="Kachouri R."/>
            <person name="Kerrest A."/>
            <person name="Koszul R."/>
            <person name="Lemaire M."/>
            <person name="Lesur I."/>
            <person name="Ma L."/>
            <person name="Muller H."/>
            <person name="Nicaud J.-M."/>
            <person name="Nikolski M."/>
            <person name="Oztas S."/>
            <person name="Ozier-Kalogeropoulos O."/>
            <person name="Pellenz S."/>
            <person name="Potier S."/>
            <person name="Richard G.-F."/>
            <person name="Straub M.-L."/>
            <person name="Suleau A."/>
            <person name="Swennen D."/>
            <person name="Tekaia F."/>
            <person name="Wesolowski-Louvel M."/>
            <person name="Westhof E."/>
            <person name="Wirth B."/>
            <person name="Zeniou-Meyer M."/>
            <person name="Zivanovic Y."/>
            <person name="Bolotin-Fukuhara M."/>
            <person name="Thierry A."/>
            <person name="Bouchier C."/>
            <person name="Caudron B."/>
            <person name="Scarpelli C."/>
            <person name="Gaillardin C."/>
            <person name="Weissenbach J."/>
            <person name="Wincker P."/>
            <person name="Souciet J.-L."/>
        </authorList>
    </citation>
    <scope>NUCLEOTIDE SEQUENCE [LARGE SCALE GENOMIC DNA]</scope>
    <source>
        <strain>ATCC 2001 / BCRC 20586 / JCM 3761 / NBRC 0622 / NRRL Y-65 / CBS 138</strain>
    </source>
</reference>
<feature type="chain" id="PRO_0000238558" description="Transcription elongation factor SPT5">
    <location>
        <begin position="1"/>
        <end position="1010"/>
    </location>
</feature>
<feature type="domain" description="KOW 1">
    <location>
        <begin position="333"/>
        <end position="360"/>
    </location>
</feature>
<feature type="domain" description="KOW 2">
    <location>
        <begin position="536"/>
        <end position="563"/>
    </location>
</feature>
<feature type="domain" description="KOW 3">
    <location>
        <begin position="750"/>
        <end position="777"/>
    </location>
</feature>
<feature type="region of interest" description="Disordered" evidence="2">
    <location>
        <begin position="1"/>
        <end position="155"/>
    </location>
</feature>
<feature type="region of interest" description="Disordered" evidence="2">
    <location>
        <begin position="160"/>
        <end position="179"/>
    </location>
</feature>
<feature type="region of interest" description="Disordered" evidence="2">
    <location>
        <begin position="895"/>
        <end position="1010"/>
    </location>
</feature>
<feature type="compositionally biased region" description="Basic and acidic residues" evidence="2">
    <location>
        <begin position="9"/>
        <end position="26"/>
    </location>
</feature>
<feature type="compositionally biased region" description="Polar residues" evidence="2">
    <location>
        <begin position="28"/>
        <end position="44"/>
    </location>
</feature>
<feature type="compositionally biased region" description="Basic and acidic residues" evidence="2">
    <location>
        <begin position="55"/>
        <end position="70"/>
    </location>
</feature>
<feature type="compositionally biased region" description="Acidic residues" evidence="2">
    <location>
        <begin position="90"/>
        <end position="119"/>
    </location>
</feature>
<feature type="compositionally biased region" description="Basic and acidic residues" evidence="2">
    <location>
        <begin position="120"/>
        <end position="134"/>
    </location>
</feature>
<feature type="compositionally biased region" description="Acidic residues" evidence="2">
    <location>
        <begin position="135"/>
        <end position="152"/>
    </location>
</feature>
<feature type="compositionally biased region" description="Gly residues" evidence="2">
    <location>
        <begin position="895"/>
        <end position="906"/>
    </location>
</feature>
<feature type="compositionally biased region" description="Low complexity" evidence="2">
    <location>
        <begin position="907"/>
        <end position="943"/>
    </location>
</feature>
<feature type="compositionally biased region" description="Polar residues" evidence="2">
    <location>
        <begin position="960"/>
        <end position="973"/>
    </location>
</feature>
<feature type="compositionally biased region" description="Low complexity" evidence="2">
    <location>
        <begin position="977"/>
        <end position="988"/>
    </location>
</feature>
<feature type="compositionally biased region" description="Gly residues" evidence="2">
    <location>
        <begin position="1001"/>
        <end position="1010"/>
    </location>
</feature>
<evidence type="ECO:0000250" key="1"/>
<evidence type="ECO:0000256" key="2">
    <source>
        <dbReference type="SAM" id="MobiDB-lite"/>
    </source>
</evidence>
<evidence type="ECO:0000305" key="3"/>
<proteinExistence type="inferred from homology"/>
<name>SPT5_CANGA</name>
<sequence>MSDGSVEPVKADDAVVDSSKRTHEEMSAENTEPVSEQAHGTGSENGDGENSLENSLEKDNAEKDNAESEKGSPSVTETAADDDSSKTDGNGEENQDAEGLAEDYDEEDFDEDEDDEDEEPAAKRRQQERNRFLDIEAEVSEDEEDEEDEEDSELVREGFITHGEDEDDEEGVAGNRRGDRLHRQLDQDLNKSSEEDAQRLAKELRERYGRSSSKQYRAAAQDGYVPQRFLLPSVDTATIWGVRCRPGKEKELVRKLLKKKFNLDRAMGKRKLKILSIFQRDNYTGRIYIEAPKQSVIEKFCNGVPDIYISQKLLIPVQELPLLLKPSKSDDVALEEGSYVRVKRGIYKGDLAMVDQISENNLEVMLKIVPRLDYGKFDEIDPVTQQRKSRRPTFAHRPAPQLFNPTMALRLDQANLYKRDDRHFTYKNEDYIDGYLYKSFRIQHVETKNIQPTVEELARFGSKEGAVDLTAISQSIKKAQAAKVSFQPGDRVEILNGEQRGSRGIVAKSTTTIATVNLPEFPLKPLEFPVSALRKIFEPGDHVMVINGEHQGDAGLVLTIKQGQVTFMSNQTREEVTITANNLSKSIDSTPTSSEYSLHDIVELSAKNVACIIQAGHDIFKVIDETGKVSTITKGSILSKINTSRSRLTTVDSSGNEIKIGDSIVEKIGARREGQVLYIQSQQIFVVSKKIVENAGVFVVNPVNVEAIASKDNMLNNKLDLSKMNPDIISKMGPPKSSMPSAAPVRTGREVALGKTVRVRSAGYKGQLGIVKDVNGDKATVELHSKNKHITIDKRKLTYYNREGGEGITYDELVNRRGRLPQARMGPSYVSAPRHMASGASGVVADNNGALAGGMTPGWGAFDGGKTPAVNSHGAGTSGATSAWGGASTWGGQGAGGSSTWGGQGGATSTWGGQGATSTWGGASAWGNKSSWGGASTWAASGEANGGVSTWGGGDRSTYGGASTWGNNATGGTSTWGGNNQEQNNGGNRSAWKDQGNKSNYGGGSSWGNQ</sequence>
<protein>
    <recommendedName>
        <fullName>Transcription elongation factor SPT5</fullName>
    </recommendedName>
    <alternativeName>
        <fullName>Chromatin elongation factor SPT5</fullName>
    </alternativeName>
</protein>
<dbReference type="EMBL" id="CR380954">
    <property type="protein sequence ID" value="CAG59932.1"/>
    <property type="molecule type" value="Genomic_DNA"/>
</dbReference>
<dbReference type="RefSeq" id="XP_446999.1">
    <property type="nucleotide sequence ID" value="XM_446999.1"/>
</dbReference>
<dbReference type="SMR" id="Q6FRZ5"/>
<dbReference type="FunCoup" id="Q6FRZ5">
    <property type="interactions" value="1508"/>
</dbReference>
<dbReference type="STRING" id="284593.Q6FRZ5"/>
<dbReference type="EnsemblFungi" id="CAGL0H04697g-T">
    <property type="protein sequence ID" value="CAGL0H04697g-T-p1"/>
    <property type="gene ID" value="CAGL0H04697g"/>
</dbReference>
<dbReference type="KEGG" id="cgr:2888499"/>
<dbReference type="CGD" id="CAL0131556">
    <property type="gene designation" value="CAGL0H04697g"/>
</dbReference>
<dbReference type="VEuPathDB" id="FungiDB:CAGL0H04697g"/>
<dbReference type="eggNOG" id="KOG1999">
    <property type="taxonomic scope" value="Eukaryota"/>
</dbReference>
<dbReference type="HOGENOM" id="CLU_003537_1_0_1"/>
<dbReference type="InParanoid" id="Q6FRZ5"/>
<dbReference type="OMA" id="YPVGYMN"/>
<dbReference type="Proteomes" id="UP000002428">
    <property type="component" value="Chromosome H"/>
</dbReference>
<dbReference type="GO" id="GO:0032044">
    <property type="term" value="C:DSIF complex"/>
    <property type="evidence" value="ECO:0007669"/>
    <property type="project" value="EnsemblFungi"/>
</dbReference>
<dbReference type="GO" id="GO:0033553">
    <property type="term" value="C:rDNA heterochromatin"/>
    <property type="evidence" value="ECO:0007669"/>
    <property type="project" value="EnsemblFungi"/>
</dbReference>
<dbReference type="GO" id="GO:0140463">
    <property type="term" value="F:chromatin-protein adaptor activity"/>
    <property type="evidence" value="ECO:0007669"/>
    <property type="project" value="EnsemblFungi"/>
</dbReference>
<dbReference type="GO" id="GO:0003677">
    <property type="term" value="F:DNA binding"/>
    <property type="evidence" value="ECO:0007669"/>
    <property type="project" value="EnsemblFungi"/>
</dbReference>
<dbReference type="GO" id="GO:0042393">
    <property type="term" value="F:histone binding"/>
    <property type="evidence" value="ECO:0007669"/>
    <property type="project" value="EnsemblFungi"/>
</dbReference>
<dbReference type="GO" id="GO:0003729">
    <property type="term" value="F:mRNA binding"/>
    <property type="evidence" value="ECO:0007669"/>
    <property type="project" value="TreeGrafter"/>
</dbReference>
<dbReference type="GO" id="GO:0001042">
    <property type="term" value="F:RNA polymerase I core binding"/>
    <property type="evidence" value="ECO:0007669"/>
    <property type="project" value="EnsemblFungi"/>
</dbReference>
<dbReference type="GO" id="GO:0001179">
    <property type="term" value="F:RNA polymerase I general transcription initiation factor binding"/>
    <property type="evidence" value="ECO:0007669"/>
    <property type="project" value="EnsemblFungi"/>
</dbReference>
<dbReference type="GO" id="GO:0000993">
    <property type="term" value="F:RNA polymerase II complex binding"/>
    <property type="evidence" value="ECO:0007669"/>
    <property type="project" value="EnsemblFungi"/>
</dbReference>
<dbReference type="GO" id="GO:0019843">
    <property type="term" value="F:rRNA binding"/>
    <property type="evidence" value="ECO:0007669"/>
    <property type="project" value="EnsemblFungi"/>
</dbReference>
<dbReference type="GO" id="GO:0003727">
    <property type="term" value="F:single-stranded RNA binding"/>
    <property type="evidence" value="ECO:0007669"/>
    <property type="project" value="EnsemblFungi"/>
</dbReference>
<dbReference type="GO" id="GO:0070990">
    <property type="term" value="F:snRNP binding"/>
    <property type="evidence" value="ECO:0007669"/>
    <property type="project" value="EnsemblFungi"/>
</dbReference>
<dbReference type="GO" id="GO:0003711">
    <property type="term" value="F:transcription elongation factor activity"/>
    <property type="evidence" value="ECO:0007669"/>
    <property type="project" value="EnsemblFungi"/>
</dbReference>
<dbReference type="GO" id="GO:0030619">
    <property type="term" value="F:U1 snRNA binding"/>
    <property type="evidence" value="ECO:0007669"/>
    <property type="project" value="EnsemblFungi"/>
</dbReference>
<dbReference type="GO" id="GO:0030620">
    <property type="term" value="F:U2 snRNA binding"/>
    <property type="evidence" value="ECO:0007669"/>
    <property type="project" value="EnsemblFungi"/>
</dbReference>
<dbReference type="GO" id="GO:0030621">
    <property type="term" value="F:U4 snRNA binding"/>
    <property type="evidence" value="ECO:0007669"/>
    <property type="project" value="EnsemblFungi"/>
</dbReference>
<dbReference type="GO" id="GO:0030623">
    <property type="term" value="F:U5 snRNA binding"/>
    <property type="evidence" value="ECO:0007669"/>
    <property type="project" value="EnsemblFungi"/>
</dbReference>
<dbReference type="GO" id="GO:0017070">
    <property type="term" value="F:U6 snRNA binding"/>
    <property type="evidence" value="ECO:0007669"/>
    <property type="project" value="EnsemblFungi"/>
</dbReference>
<dbReference type="GO" id="GO:0008298">
    <property type="term" value="P:intracellular mRNA localization"/>
    <property type="evidence" value="ECO:0007669"/>
    <property type="project" value="EnsemblFungi"/>
</dbReference>
<dbReference type="GO" id="GO:2001208">
    <property type="term" value="P:negative regulation of transcription elongation by RNA polymerase I"/>
    <property type="evidence" value="ECO:0007669"/>
    <property type="project" value="EnsemblFungi"/>
</dbReference>
<dbReference type="GO" id="GO:0010508">
    <property type="term" value="P:positive regulation of autophagy"/>
    <property type="evidence" value="ECO:0007669"/>
    <property type="project" value="EnsemblFungi"/>
</dbReference>
<dbReference type="GO" id="GO:2001209">
    <property type="term" value="P:positive regulation of transcription elongation by RNA polymerase I"/>
    <property type="evidence" value="ECO:0007669"/>
    <property type="project" value="EnsemblFungi"/>
</dbReference>
<dbReference type="GO" id="GO:0032968">
    <property type="term" value="P:positive regulation of transcription elongation by RNA polymerase II"/>
    <property type="evidence" value="ECO:0007669"/>
    <property type="project" value="EnsemblFungi"/>
</dbReference>
<dbReference type="GO" id="GO:2000232">
    <property type="term" value="P:regulation of rRNA processing"/>
    <property type="evidence" value="ECO:0007669"/>
    <property type="project" value="EnsemblFungi"/>
</dbReference>
<dbReference type="GO" id="GO:0090262">
    <property type="term" value="P:regulation of transcription-coupled nucleotide-excision repair"/>
    <property type="evidence" value="ECO:0007669"/>
    <property type="project" value="EnsemblFungi"/>
</dbReference>
<dbReference type="GO" id="GO:0000245">
    <property type="term" value="P:spliceosomal complex assembly"/>
    <property type="evidence" value="ECO:0007669"/>
    <property type="project" value="EnsemblFungi"/>
</dbReference>
<dbReference type="GO" id="GO:0140673">
    <property type="term" value="P:transcription elongation-coupled chromatin remodeling"/>
    <property type="evidence" value="ECO:0007669"/>
    <property type="project" value="InterPro"/>
</dbReference>
<dbReference type="CDD" id="cd06081">
    <property type="entry name" value="KOW_Spt5_1"/>
    <property type="match status" value="1"/>
</dbReference>
<dbReference type="CDD" id="cd06082">
    <property type="entry name" value="KOW_Spt5_2"/>
    <property type="match status" value="1"/>
</dbReference>
<dbReference type="CDD" id="cd06083">
    <property type="entry name" value="KOW_Spt5_3"/>
    <property type="match status" value="1"/>
</dbReference>
<dbReference type="CDD" id="cd06084">
    <property type="entry name" value="KOW_Spt5_4"/>
    <property type="match status" value="1"/>
</dbReference>
<dbReference type="CDD" id="cd06085">
    <property type="entry name" value="KOW_Spt5_5"/>
    <property type="match status" value="1"/>
</dbReference>
<dbReference type="CDD" id="cd09888">
    <property type="entry name" value="NGN_Euk"/>
    <property type="match status" value="1"/>
</dbReference>
<dbReference type="FunFam" id="2.30.30.30:FF:000058">
    <property type="entry name" value="Transcription elongation factor SPT5"/>
    <property type="match status" value="1"/>
</dbReference>
<dbReference type="FunFam" id="2.30.30.30:FF:000063">
    <property type="entry name" value="Transcription elongation factor SPT5"/>
    <property type="match status" value="1"/>
</dbReference>
<dbReference type="FunFam" id="3.30.70.940:FF:000005">
    <property type="entry name" value="Transcription elongation factor SPT5"/>
    <property type="match status" value="1"/>
</dbReference>
<dbReference type="Gene3D" id="2.30.30.30">
    <property type="match status" value="3"/>
</dbReference>
<dbReference type="Gene3D" id="3.30.70.940">
    <property type="entry name" value="NusG, N-terminal domain"/>
    <property type="match status" value="1"/>
</dbReference>
<dbReference type="InterPro" id="IPR005824">
    <property type="entry name" value="KOW"/>
</dbReference>
<dbReference type="InterPro" id="IPR041973">
    <property type="entry name" value="KOW_Spt5_1"/>
</dbReference>
<dbReference type="InterPro" id="IPR041975">
    <property type="entry name" value="KOW_Spt5_2"/>
</dbReference>
<dbReference type="InterPro" id="IPR041976">
    <property type="entry name" value="KOW_Spt5_3"/>
</dbReference>
<dbReference type="InterPro" id="IPR041977">
    <property type="entry name" value="KOW_Spt5_4"/>
</dbReference>
<dbReference type="InterPro" id="IPR041978">
    <property type="entry name" value="KOW_Spt5_5"/>
</dbReference>
<dbReference type="InterPro" id="IPR005100">
    <property type="entry name" value="NGN-domain"/>
</dbReference>
<dbReference type="InterPro" id="IPR006645">
    <property type="entry name" value="NGN-like_dom"/>
</dbReference>
<dbReference type="InterPro" id="IPR036735">
    <property type="entry name" value="NGN_dom_sf"/>
</dbReference>
<dbReference type="InterPro" id="IPR039385">
    <property type="entry name" value="NGN_Euk"/>
</dbReference>
<dbReference type="InterPro" id="IPR014722">
    <property type="entry name" value="Rib_uL2_dom2"/>
</dbReference>
<dbReference type="InterPro" id="IPR039659">
    <property type="entry name" value="SPT5"/>
</dbReference>
<dbReference type="InterPro" id="IPR024945">
    <property type="entry name" value="Spt5_C_dom"/>
</dbReference>
<dbReference type="InterPro" id="IPR022581">
    <property type="entry name" value="Spt5_N"/>
</dbReference>
<dbReference type="InterPro" id="IPR017071">
    <property type="entry name" value="TF_Spt5_eukaryote"/>
</dbReference>
<dbReference type="InterPro" id="IPR008991">
    <property type="entry name" value="Translation_prot_SH3-like_sf"/>
</dbReference>
<dbReference type="PANTHER" id="PTHR11125">
    <property type="entry name" value="SUPPRESSOR OF TY 5"/>
    <property type="match status" value="1"/>
</dbReference>
<dbReference type="PANTHER" id="PTHR11125:SF7">
    <property type="entry name" value="TRANSCRIPTION ELONGATION FACTOR SPT5"/>
    <property type="match status" value="1"/>
</dbReference>
<dbReference type="Pfam" id="PF23042">
    <property type="entry name" value="KOW1_SPT5"/>
    <property type="match status" value="1"/>
</dbReference>
<dbReference type="Pfam" id="PF23291">
    <property type="entry name" value="KOW4_SPT5"/>
    <property type="match status" value="1"/>
</dbReference>
<dbReference type="Pfam" id="PF23290">
    <property type="entry name" value="KOW5_SPT5"/>
    <property type="match status" value="1"/>
</dbReference>
<dbReference type="Pfam" id="PF23037">
    <property type="entry name" value="KOWx_SPT5"/>
    <property type="match status" value="1"/>
</dbReference>
<dbReference type="Pfam" id="PF03439">
    <property type="entry name" value="Spt5-NGN"/>
    <property type="match status" value="1"/>
</dbReference>
<dbReference type="Pfam" id="PF11942">
    <property type="entry name" value="Spt5_N"/>
    <property type="match status" value="1"/>
</dbReference>
<dbReference type="PIRSF" id="PIRSF036945">
    <property type="entry name" value="Spt5"/>
    <property type="match status" value="1"/>
</dbReference>
<dbReference type="SMART" id="SM01104">
    <property type="entry name" value="CTD"/>
    <property type="match status" value="1"/>
</dbReference>
<dbReference type="SMART" id="SM00739">
    <property type="entry name" value="KOW"/>
    <property type="match status" value="4"/>
</dbReference>
<dbReference type="SMART" id="SM00738">
    <property type="entry name" value="NGN"/>
    <property type="match status" value="1"/>
</dbReference>
<dbReference type="SUPFAM" id="SSF50104">
    <property type="entry name" value="Translation proteins SH3-like domain"/>
    <property type="match status" value="1"/>
</dbReference>
<accession>Q6FRZ5</accession>
<organism>
    <name type="scientific">Candida glabrata (strain ATCC 2001 / BCRC 20586 / JCM 3761 / NBRC 0622 / NRRL Y-65 / CBS 138)</name>
    <name type="common">Yeast</name>
    <name type="synonym">Nakaseomyces glabratus</name>
    <dbReference type="NCBI Taxonomy" id="284593"/>
    <lineage>
        <taxon>Eukaryota</taxon>
        <taxon>Fungi</taxon>
        <taxon>Dikarya</taxon>
        <taxon>Ascomycota</taxon>
        <taxon>Saccharomycotina</taxon>
        <taxon>Saccharomycetes</taxon>
        <taxon>Saccharomycetales</taxon>
        <taxon>Saccharomycetaceae</taxon>
        <taxon>Nakaseomyces</taxon>
    </lineage>
</organism>